<dbReference type="EC" id="2.7.4.3" evidence="1"/>
<dbReference type="EMBL" id="AM743169">
    <property type="protein sequence ID" value="CAQ47290.1"/>
    <property type="molecule type" value="Genomic_DNA"/>
</dbReference>
<dbReference type="RefSeq" id="WP_012481184.1">
    <property type="nucleotide sequence ID" value="NC_010943.1"/>
</dbReference>
<dbReference type="SMR" id="B2FT48"/>
<dbReference type="EnsemblBacteria" id="CAQ47290">
    <property type="protein sequence ID" value="CAQ47290"/>
    <property type="gene ID" value="Smlt3886"/>
</dbReference>
<dbReference type="KEGG" id="sml:Smlt3886"/>
<dbReference type="PATRIC" id="fig|522373.3.peg.3661"/>
<dbReference type="eggNOG" id="COG0563">
    <property type="taxonomic scope" value="Bacteria"/>
</dbReference>
<dbReference type="HOGENOM" id="CLU_032354_4_1_6"/>
<dbReference type="UniPathway" id="UPA00588">
    <property type="reaction ID" value="UER00649"/>
</dbReference>
<dbReference type="Proteomes" id="UP000008840">
    <property type="component" value="Chromosome"/>
</dbReference>
<dbReference type="GO" id="GO:0005737">
    <property type="term" value="C:cytoplasm"/>
    <property type="evidence" value="ECO:0007669"/>
    <property type="project" value="UniProtKB-SubCell"/>
</dbReference>
<dbReference type="GO" id="GO:0004017">
    <property type="term" value="F:adenylate kinase activity"/>
    <property type="evidence" value="ECO:0007669"/>
    <property type="project" value="UniProtKB-UniRule"/>
</dbReference>
<dbReference type="GO" id="GO:0005524">
    <property type="term" value="F:ATP binding"/>
    <property type="evidence" value="ECO:0007669"/>
    <property type="project" value="UniProtKB-UniRule"/>
</dbReference>
<dbReference type="GO" id="GO:0044209">
    <property type="term" value="P:AMP salvage"/>
    <property type="evidence" value="ECO:0007669"/>
    <property type="project" value="UniProtKB-UniRule"/>
</dbReference>
<dbReference type="CDD" id="cd01428">
    <property type="entry name" value="ADK"/>
    <property type="match status" value="1"/>
</dbReference>
<dbReference type="Gene3D" id="3.40.50.300">
    <property type="entry name" value="P-loop containing nucleotide triphosphate hydrolases"/>
    <property type="match status" value="1"/>
</dbReference>
<dbReference type="HAMAP" id="MF_00235">
    <property type="entry name" value="Adenylate_kinase_Adk"/>
    <property type="match status" value="1"/>
</dbReference>
<dbReference type="InterPro" id="IPR006259">
    <property type="entry name" value="Adenyl_kin_sub"/>
</dbReference>
<dbReference type="InterPro" id="IPR000850">
    <property type="entry name" value="Adenylat/UMP-CMP_kin"/>
</dbReference>
<dbReference type="InterPro" id="IPR033690">
    <property type="entry name" value="Adenylat_kinase_CS"/>
</dbReference>
<dbReference type="InterPro" id="IPR027417">
    <property type="entry name" value="P-loop_NTPase"/>
</dbReference>
<dbReference type="NCBIfam" id="TIGR01351">
    <property type="entry name" value="adk"/>
    <property type="match status" value="1"/>
</dbReference>
<dbReference type="NCBIfam" id="NF001381">
    <property type="entry name" value="PRK00279.1-3"/>
    <property type="match status" value="1"/>
</dbReference>
<dbReference type="NCBIfam" id="NF011100">
    <property type="entry name" value="PRK14527.1"/>
    <property type="match status" value="1"/>
</dbReference>
<dbReference type="NCBIfam" id="NF011101">
    <property type="entry name" value="PRK14528.1"/>
    <property type="match status" value="1"/>
</dbReference>
<dbReference type="NCBIfam" id="NF011104">
    <property type="entry name" value="PRK14531.1"/>
    <property type="match status" value="1"/>
</dbReference>
<dbReference type="NCBIfam" id="NF011105">
    <property type="entry name" value="PRK14532.1"/>
    <property type="match status" value="1"/>
</dbReference>
<dbReference type="PANTHER" id="PTHR23359">
    <property type="entry name" value="NUCLEOTIDE KINASE"/>
    <property type="match status" value="1"/>
</dbReference>
<dbReference type="Pfam" id="PF00406">
    <property type="entry name" value="ADK"/>
    <property type="match status" value="1"/>
</dbReference>
<dbReference type="PRINTS" id="PR00094">
    <property type="entry name" value="ADENYLTKNASE"/>
</dbReference>
<dbReference type="SUPFAM" id="SSF52540">
    <property type="entry name" value="P-loop containing nucleoside triphosphate hydrolases"/>
    <property type="match status" value="1"/>
</dbReference>
<dbReference type="PROSITE" id="PS00113">
    <property type="entry name" value="ADENYLATE_KINASE"/>
    <property type="match status" value="1"/>
</dbReference>
<gene>
    <name evidence="1" type="primary">adk</name>
    <name type="ordered locus">Smlt3886</name>
</gene>
<comment type="function">
    <text evidence="1">Catalyzes the reversible transfer of the terminal phosphate group between ATP and AMP. Plays an important role in cellular energy homeostasis and in adenine nucleotide metabolism.</text>
</comment>
<comment type="catalytic activity">
    <reaction evidence="1">
        <text>AMP + ATP = 2 ADP</text>
        <dbReference type="Rhea" id="RHEA:12973"/>
        <dbReference type="ChEBI" id="CHEBI:30616"/>
        <dbReference type="ChEBI" id="CHEBI:456215"/>
        <dbReference type="ChEBI" id="CHEBI:456216"/>
        <dbReference type="EC" id="2.7.4.3"/>
    </reaction>
</comment>
<comment type="pathway">
    <text evidence="1">Purine metabolism; AMP biosynthesis via salvage pathway; AMP from ADP: step 1/1.</text>
</comment>
<comment type="subunit">
    <text evidence="1">Monomer.</text>
</comment>
<comment type="subcellular location">
    <subcellularLocation>
        <location evidence="1">Cytoplasm</location>
    </subcellularLocation>
</comment>
<comment type="domain">
    <text evidence="1">Consists of three domains, a large central CORE domain and two small peripheral domains, NMPbind and LID, which undergo movements during catalysis. The LID domain closes over the site of phosphoryl transfer upon ATP binding. Assembling and dissambling the active center during each catalytic cycle provides an effective means to prevent ATP hydrolysis.</text>
</comment>
<comment type="similarity">
    <text evidence="1">Belongs to the adenylate kinase family.</text>
</comment>
<sequence>MRLVLLGPPGSGKGTQATRLKEKLEIAHISTGDMLRAEIAAGTELGKQAKTVMDAGNLVSDDILLGMLESRLTQPDVAKGFILDGYPRNVAQANAMDGLLAKIGQPLDAVVQLDVATELLVERIAGRAKEQGRADDTPEAVRQRLQVYNDQTAPVVDFYAGRGTLARVDGVGELDEIEARILAAIKA</sequence>
<organism>
    <name type="scientific">Stenotrophomonas maltophilia (strain K279a)</name>
    <dbReference type="NCBI Taxonomy" id="522373"/>
    <lineage>
        <taxon>Bacteria</taxon>
        <taxon>Pseudomonadati</taxon>
        <taxon>Pseudomonadota</taxon>
        <taxon>Gammaproteobacteria</taxon>
        <taxon>Lysobacterales</taxon>
        <taxon>Lysobacteraceae</taxon>
        <taxon>Stenotrophomonas</taxon>
        <taxon>Stenotrophomonas maltophilia group</taxon>
    </lineage>
</organism>
<accession>B2FT48</accession>
<protein>
    <recommendedName>
        <fullName evidence="1">Adenylate kinase</fullName>
        <shortName evidence="1">AK</shortName>
        <ecNumber evidence="1">2.7.4.3</ecNumber>
    </recommendedName>
    <alternativeName>
        <fullName evidence="1">ATP-AMP transphosphorylase</fullName>
    </alternativeName>
    <alternativeName>
        <fullName evidence="1">ATP:AMP phosphotransferase</fullName>
    </alternativeName>
    <alternativeName>
        <fullName evidence="1">Adenylate monophosphate kinase</fullName>
    </alternativeName>
</protein>
<proteinExistence type="inferred from homology"/>
<keyword id="KW-0067">ATP-binding</keyword>
<keyword id="KW-0963">Cytoplasm</keyword>
<keyword id="KW-0418">Kinase</keyword>
<keyword id="KW-0545">Nucleotide biosynthesis</keyword>
<keyword id="KW-0547">Nucleotide-binding</keyword>
<keyword id="KW-1185">Reference proteome</keyword>
<keyword id="KW-0808">Transferase</keyword>
<evidence type="ECO:0000255" key="1">
    <source>
        <dbReference type="HAMAP-Rule" id="MF_00235"/>
    </source>
</evidence>
<name>KAD_STRMK</name>
<feature type="chain" id="PRO_1000100612" description="Adenylate kinase">
    <location>
        <begin position="1"/>
        <end position="187"/>
    </location>
</feature>
<feature type="region of interest" description="NMP" evidence="1">
    <location>
        <begin position="30"/>
        <end position="59"/>
    </location>
</feature>
<feature type="region of interest" description="LID" evidence="1">
    <location>
        <begin position="126"/>
        <end position="136"/>
    </location>
</feature>
<feature type="binding site" evidence="1">
    <location>
        <begin position="10"/>
        <end position="15"/>
    </location>
    <ligand>
        <name>ATP</name>
        <dbReference type="ChEBI" id="CHEBI:30616"/>
    </ligand>
</feature>
<feature type="binding site" evidence="1">
    <location>
        <position position="31"/>
    </location>
    <ligand>
        <name>AMP</name>
        <dbReference type="ChEBI" id="CHEBI:456215"/>
    </ligand>
</feature>
<feature type="binding site" evidence="1">
    <location>
        <position position="36"/>
    </location>
    <ligand>
        <name>AMP</name>
        <dbReference type="ChEBI" id="CHEBI:456215"/>
    </ligand>
</feature>
<feature type="binding site" evidence="1">
    <location>
        <begin position="57"/>
        <end position="59"/>
    </location>
    <ligand>
        <name>AMP</name>
        <dbReference type="ChEBI" id="CHEBI:456215"/>
    </ligand>
</feature>
<feature type="binding site" evidence="1">
    <location>
        <begin position="85"/>
        <end position="88"/>
    </location>
    <ligand>
        <name>AMP</name>
        <dbReference type="ChEBI" id="CHEBI:456215"/>
    </ligand>
</feature>
<feature type="binding site" evidence="1">
    <location>
        <position position="92"/>
    </location>
    <ligand>
        <name>AMP</name>
        <dbReference type="ChEBI" id="CHEBI:456215"/>
    </ligand>
</feature>
<feature type="binding site" evidence="1">
    <location>
        <position position="127"/>
    </location>
    <ligand>
        <name>ATP</name>
        <dbReference type="ChEBI" id="CHEBI:30616"/>
    </ligand>
</feature>
<feature type="binding site" evidence="1">
    <location>
        <position position="133"/>
    </location>
    <ligand>
        <name>AMP</name>
        <dbReference type="ChEBI" id="CHEBI:456215"/>
    </ligand>
</feature>
<feature type="binding site" evidence="1">
    <location>
        <position position="144"/>
    </location>
    <ligand>
        <name>AMP</name>
        <dbReference type="ChEBI" id="CHEBI:456215"/>
    </ligand>
</feature>
<feature type="binding site" evidence="1">
    <location>
        <position position="172"/>
    </location>
    <ligand>
        <name>ATP</name>
        <dbReference type="ChEBI" id="CHEBI:30616"/>
    </ligand>
</feature>
<reference key="1">
    <citation type="journal article" date="2008" name="Genome Biol.">
        <title>The complete genome, comparative and functional analysis of Stenotrophomonas maltophilia reveals an organism heavily shielded by drug resistance determinants.</title>
        <authorList>
            <person name="Crossman L.C."/>
            <person name="Gould V.C."/>
            <person name="Dow J.M."/>
            <person name="Vernikos G.S."/>
            <person name="Okazaki A."/>
            <person name="Sebaihia M."/>
            <person name="Saunders D."/>
            <person name="Arrowsmith C."/>
            <person name="Carver T."/>
            <person name="Peters N."/>
            <person name="Adlem E."/>
            <person name="Kerhornou A."/>
            <person name="Lord A."/>
            <person name="Murphy L."/>
            <person name="Seeger K."/>
            <person name="Squares R."/>
            <person name="Rutter S."/>
            <person name="Quail M.A."/>
            <person name="Rajandream M.A."/>
            <person name="Harris D."/>
            <person name="Churcher C."/>
            <person name="Bentley S.D."/>
            <person name="Parkhill J."/>
            <person name="Thomson N.R."/>
            <person name="Avison M.B."/>
        </authorList>
    </citation>
    <scope>NUCLEOTIDE SEQUENCE [LARGE SCALE GENOMIC DNA]</scope>
    <source>
        <strain>K279a</strain>
    </source>
</reference>